<evidence type="ECO:0000255" key="1">
    <source>
        <dbReference type="HAMAP-Rule" id="MF_00503"/>
    </source>
</evidence>
<evidence type="ECO:0000305" key="2"/>
<organism>
    <name type="scientific">Brucella suis biovar 1 (strain 1330)</name>
    <dbReference type="NCBI Taxonomy" id="204722"/>
    <lineage>
        <taxon>Bacteria</taxon>
        <taxon>Pseudomonadati</taxon>
        <taxon>Pseudomonadota</taxon>
        <taxon>Alphaproteobacteria</taxon>
        <taxon>Hyphomicrobiales</taxon>
        <taxon>Brucellaceae</taxon>
        <taxon>Brucella/Ochrobactrum group</taxon>
        <taxon>Brucella</taxon>
    </lineage>
</organism>
<proteinExistence type="inferred from homology"/>
<dbReference type="EMBL" id="AE014291">
    <property type="protein sequence ID" value="AAN29395.1"/>
    <property type="molecule type" value="Genomic_DNA"/>
</dbReference>
<dbReference type="EMBL" id="CP002997">
    <property type="protein sequence ID" value="AEM17808.1"/>
    <property type="molecule type" value="Genomic_DNA"/>
</dbReference>
<dbReference type="RefSeq" id="WP_004691968.1">
    <property type="nucleotide sequence ID" value="NZ_KN046804.1"/>
</dbReference>
<dbReference type="SMR" id="Q8G276"/>
<dbReference type="GeneID" id="55590210"/>
<dbReference type="KEGG" id="bms:BR0452"/>
<dbReference type="KEGG" id="bsi:BS1330_I0453"/>
<dbReference type="PATRIC" id="fig|204722.21.peg.1408"/>
<dbReference type="HOGENOM" id="CLU_078938_1_0_5"/>
<dbReference type="PhylomeDB" id="Q8G276"/>
<dbReference type="Proteomes" id="UP000007104">
    <property type="component" value="Chromosome I"/>
</dbReference>
<dbReference type="GO" id="GO:1990904">
    <property type="term" value="C:ribonucleoprotein complex"/>
    <property type="evidence" value="ECO:0007669"/>
    <property type="project" value="UniProtKB-KW"/>
</dbReference>
<dbReference type="GO" id="GO:0005840">
    <property type="term" value="C:ribosome"/>
    <property type="evidence" value="ECO:0007669"/>
    <property type="project" value="UniProtKB-KW"/>
</dbReference>
<dbReference type="GO" id="GO:0019843">
    <property type="term" value="F:rRNA binding"/>
    <property type="evidence" value="ECO:0007669"/>
    <property type="project" value="UniProtKB-UniRule"/>
</dbReference>
<dbReference type="GO" id="GO:0003735">
    <property type="term" value="F:structural constituent of ribosome"/>
    <property type="evidence" value="ECO:0007669"/>
    <property type="project" value="InterPro"/>
</dbReference>
<dbReference type="GO" id="GO:0006412">
    <property type="term" value="P:translation"/>
    <property type="evidence" value="ECO:0007669"/>
    <property type="project" value="UniProtKB-UniRule"/>
</dbReference>
<dbReference type="Gene3D" id="3.10.430.100">
    <property type="entry name" value="Ribosomal protein L9, C-terminal domain"/>
    <property type="match status" value="1"/>
</dbReference>
<dbReference type="Gene3D" id="3.40.5.10">
    <property type="entry name" value="Ribosomal protein L9, N-terminal domain"/>
    <property type="match status" value="1"/>
</dbReference>
<dbReference type="HAMAP" id="MF_00503">
    <property type="entry name" value="Ribosomal_bL9"/>
    <property type="match status" value="1"/>
</dbReference>
<dbReference type="InterPro" id="IPR000244">
    <property type="entry name" value="Ribosomal_bL9"/>
</dbReference>
<dbReference type="InterPro" id="IPR009027">
    <property type="entry name" value="Ribosomal_bL9/RNase_H1_N"/>
</dbReference>
<dbReference type="InterPro" id="IPR020594">
    <property type="entry name" value="Ribosomal_bL9_bac/chp"/>
</dbReference>
<dbReference type="InterPro" id="IPR020069">
    <property type="entry name" value="Ribosomal_bL9_C"/>
</dbReference>
<dbReference type="InterPro" id="IPR036791">
    <property type="entry name" value="Ribosomal_bL9_C_sf"/>
</dbReference>
<dbReference type="InterPro" id="IPR020070">
    <property type="entry name" value="Ribosomal_bL9_N"/>
</dbReference>
<dbReference type="InterPro" id="IPR036935">
    <property type="entry name" value="Ribosomal_bL9_N_sf"/>
</dbReference>
<dbReference type="NCBIfam" id="TIGR00158">
    <property type="entry name" value="L9"/>
    <property type="match status" value="1"/>
</dbReference>
<dbReference type="PANTHER" id="PTHR21368">
    <property type="entry name" value="50S RIBOSOMAL PROTEIN L9"/>
    <property type="match status" value="1"/>
</dbReference>
<dbReference type="Pfam" id="PF03948">
    <property type="entry name" value="Ribosomal_L9_C"/>
    <property type="match status" value="1"/>
</dbReference>
<dbReference type="Pfam" id="PF01281">
    <property type="entry name" value="Ribosomal_L9_N"/>
    <property type="match status" value="1"/>
</dbReference>
<dbReference type="SUPFAM" id="SSF55658">
    <property type="entry name" value="L9 N-domain-like"/>
    <property type="match status" value="1"/>
</dbReference>
<dbReference type="SUPFAM" id="SSF55653">
    <property type="entry name" value="Ribosomal protein L9 C-domain"/>
    <property type="match status" value="1"/>
</dbReference>
<dbReference type="PROSITE" id="PS00651">
    <property type="entry name" value="RIBOSOMAL_L9"/>
    <property type="match status" value="1"/>
</dbReference>
<keyword id="KW-0687">Ribonucleoprotein</keyword>
<keyword id="KW-0689">Ribosomal protein</keyword>
<keyword id="KW-0694">RNA-binding</keyword>
<keyword id="KW-0699">rRNA-binding</keyword>
<sequence length="189" mass="20971">MEVILLERIGRLGQMGDTVKVKDGYARNFLLPQGKALRANEANKKKFEGQRAQLEAQNLERKNEAQAVADKLNGESFIVVRSAGETGQLYGSVSTRDIAEIITADGFTLHRNQVELNHPIKTIGLHEVSVSLHPEVQVKVMVNIARSTEEAERQAKGEDLTSIEAIYGIEEQPLSEEVFDDEDEAEDQA</sequence>
<gene>
    <name evidence="1" type="primary">rplI</name>
    <name type="ordered locus">BR0452</name>
    <name type="ordered locus">BS1330_I0453</name>
</gene>
<feature type="chain" id="PRO_0000176621" description="Large ribosomal subunit protein bL9">
    <location>
        <begin position="1"/>
        <end position="189"/>
    </location>
</feature>
<reference key="1">
    <citation type="journal article" date="2002" name="Proc. Natl. Acad. Sci. U.S.A.">
        <title>The Brucella suis genome reveals fundamental similarities between animal and plant pathogens and symbionts.</title>
        <authorList>
            <person name="Paulsen I.T."/>
            <person name="Seshadri R."/>
            <person name="Nelson K.E."/>
            <person name="Eisen J.A."/>
            <person name="Heidelberg J.F."/>
            <person name="Read T.D."/>
            <person name="Dodson R.J."/>
            <person name="Umayam L.A."/>
            <person name="Brinkac L.M."/>
            <person name="Beanan M.J."/>
            <person name="Daugherty S.C."/>
            <person name="DeBoy R.T."/>
            <person name="Durkin A.S."/>
            <person name="Kolonay J.F."/>
            <person name="Madupu R."/>
            <person name="Nelson W.C."/>
            <person name="Ayodeji B."/>
            <person name="Kraul M."/>
            <person name="Shetty J."/>
            <person name="Malek J.A."/>
            <person name="Van Aken S.E."/>
            <person name="Riedmuller S."/>
            <person name="Tettelin H."/>
            <person name="Gill S.R."/>
            <person name="White O."/>
            <person name="Salzberg S.L."/>
            <person name="Hoover D.L."/>
            <person name="Lindler L.E."/>
            <person name="Halling S.M."/>
            <person name="Boyle S.M."/>
            <person name="Fraser C.M."/>
        </authorList>
    </citation>
    <scope>NUCLEOTIDE SEQUENCE [LARGE SCALE GENOMIC DNA]</scope>
    <source>
        <strain>1330</strain>
    </source>
</reference>
<reference key="2">
    <citation type="journal article" date="2011" name="J. Bacteriol.">
        <title>Revised genome sequence of Brucella suis 1330.</title>
        <authorList>
            <person name="Tae H."/>
            <person name="Shallom S."/>
            <person name="Settlage R."/>
            <person name="Preston D."/>
            <person name="Adams L.G."/>
            <person name="Garner H.R."/>
        </authorList>
    </citation>
    <scope>NUCLEOTIDE SEQUENCE [LARGE SCALE GENOMIC DNA]</scope>
    <source>
        <strain>1330</strain>
    </source>
</reference>
<comment type="function">
    <text evidence="1">Binds to the 23S rRNA.</text>
</comment>
<comment type="similarity">
    <text evidence="1">Belongs to the bacterial ribosomal protein bL9 family.</text>
</comment>
<accession>Q8G276</accession>
<accession>G0K701</accession>
<protein>
    <recommendedName>
        <fullName evidence="1">Large ribosomal subunit protein bL9</fullName>
    </recommendedName>
    <alternativeName>
        <fullName evidence="2">50S ribosomal protein L9</fullName>
    </alternativeName>
</protein>
<name>RL9_BRUSU</name>